<keyword id="KW-0010">Activator</keyword>
<keyword id="KW-0156">Chromatin regulator</keyword>
<keyword id="KW-0479">Metal-binding</keyword>
<keyword id="KW-0539">Nucleus</keyword>
<keyword id="KW-1185">Reference proteome</keyword>
<keyword id="KW-0804">Transcription</keyword>
<keyword id="KW-0805">Transcription regulation</keyword>
<keyword id="KW-0862">Zinc</keyword>
<keyword id="KW-0863">Zinc-finger</keyword>
<name>SGF11_KLULA</name>
<protein>
    <recommendedName>
        <fullName evidence="1">SAGA-associated factor 11</fullName>
    </recommendedName>
</protein>
<proteinExistence type="inferred from homology"/>
<feature type="chain" id="PRO_0000367540" description="SAGA-associated factor 11">
    <location>
        <begin position="1"/>
        <end position="97"/>
    </location>
</feature>
<feature type="zinc finger region" description="SGF11-type" evidence="1">
    <location>
        <begin position="70"/>
        <end position="91"/>
    </location>
</feature>
<comment type="function">
    <text evidence="1">Functions as a component of the transcription regulatory histone acetylation (HAT) complex SAGA. At the promoters, SAGA is required for recruitment of the basal transcription machinery. It influences RNA polymerase II transcriptional activity through different activities such as TBP interaction and promoter selectivity, interaction with transcription activators, and chromatin modification through histone acetylation and deubiquitination. SAGA acetylates nucleosomal histone H3 to some extent (to form H3K9ac, H3K14ac, H3K18ac and H3K23ac). SAGA interacts with DNA via upstream activating sequences (UASs). Involved in transcriptional regulation of a subset of SAGA-regulated genes. Within the SAGA complex, participates in a subcomplex, that specifically deubiquitinates histones H2B.</text>
</comment>
<comment type="subunit">
    <text evidence="1">Component of the 1.8 MDa SAGA transcription coactivator-HAT complex. SAGA is built of 5 distinct domains with specialized functions. Within the SAGA complex, SUS1, SGF11, SGF73 and UBP8 form an additional subcomplex of SAGA called the DUB module (deubiquitination module). Interacts directly with SGF73, SUS1 and UBP8.</text>
</comment>
<comment type="subcellular location">
    <subcellularLocation>
        <location evidence="1">Nucleus</location>
    </subcellularLocation>
</comment>
<comment type="domain">
    <text evidence="1">The long N-terminal helix forms part of the 'assembly lobe' of the SAGA deubiquitination module.</text>
</comment>
<comment type="domain">
    <text evidence="1">The C-terminal SGF11-type zinc-finger domain together with the C-terminal catalytic domain of UBP8 forms the 'catalytic lobe' of the SAGA deubiquitination module.</text>
</comment>
<comment type="similarity">
    <text evidence="1">Belongs to the SGF11 family.</text>
</comment>
<accession>Q6CR57</accession>
<dbReference type="EMBL" id="CR382124">
    <property type="protein sequence ID" value="CAH00678.1"/>
    <property type="molecule type" value="Genomic_DNA"/>
</dbReference>
<dbReference type="RefSeq" id="XP_453582.1">
    <property type="nucleotide sequence ID" value="XM_453582.1"/>
</dbReference>
<dbReference type="SMR" id="Q6CR57"/>
<dbReference type="FunCoup" id="Q6CR57">
    <property type="interactions" value="316"/>
</dbReference>
<dbReference type="STRING" id="284590.Q6CR57"/>
<dbReference type="PaxDb" id="284590-Q6CR57"/>
<dbReference type="KEGG" id="kla:KLLA0_D11682g"/>
<dbReference type="eggNOG" id="KOG2612">
    <property type="taxonomic scope" value="Eukaryota"/>
</dbReference>
<dbReference type="HOGENOM" id="CLU_2320099_0_0_1"/>
<dbReference type="InParanoid" id="Q6CR57"/>
<dbReference type="OMA" id="SSQYFHC"/>
<dbReference type="Proteomes" id="UP000000598">
    <property type="component" value="Chromosome D"/>
</dbReference>
<dbReference type="GO" id="GO:0071819">
    <property type="term" value="C:DUBm complex"/>
    <property type="evidence" value="ECO:0007669"/>
    <property type="project" value="UniProtKB-UniRule"/>
</dbReference>
<dbReference type="GO" id="GO:0000124">
    <property type="term" value="C:SAGA complex"/>
    <property type="evidence" value="ECO:0007669"/>
    <property type="project" value="UniProtKB-UniRule"/>
</dbReference>
<dbReference type="GO" id="GO:0003713">
    <property type="term" value="F:transcription coactivator activity"/>
    <property type="evidence" value="ECO:0007669"/>
    <property type="project" value="UniProtKB-UniRule"/>
</dbReference>
<dbReference type="GO" id="GO:0008270">
    <property type="term" value="F:zinc ion binding"/>
    <property type="evidence" value="ECO:0007669"/>
    <property type="project" value="UniProtKB-UniRule"/>
</dbReference>
<dbReference type="GO" id="GO:0006325">
    <property type="term" value="P:chromatin organization"/>
    <property type="evidence" value="ECO:0007669"/>
    <property type="project" value="UniProtKB-KW"/>
</dbReference>
<dbReference type="Gene3D" id="1.10.287.210">
    <property type="match status" value="1"/>
</dbReference>
<dbReference type="Gene3D" id="3.30.160.60">
    <property type="entry name" value="Classic Zinc Finger"/>
    <property type="match status" value="1"/>
</dbReference>
<dbReference type="HAMAP" id="MF_03047">
    <property type="entry name" value="Sgf11"/>
    <property type="match status" value="1"/>
</dbReference>
<dbReference type="InterPro" id="IPR013246">
    <property type="entry name" value="SAGA_su_Sgf11"/>
</dbReference>
<dbReference type="InterPro" id="IPR041216">
    <property type="entry name" value="Sgf11_N"/>
</dbReference>
<dbReference type="Pfam" id="PF08209">
    <property type="entry name" value="Sgf11"/>
    <property type="match status" value="1"/>
</dbReference>
<dbReference type="Pfam" id="PF18519">
    <property type="entry name" value="Sgf11_N"/>
    <property type="match status" value="1"/>
</dbReference>
<sequence>MTASLTTDSVADSIYQNILTSIIQDIISRQTVKRKLLKLQFPDAKPYYADPSGTLDIHGKAKQADSAVYIECNVCGREVSGNRFAAHLVRCLSRGRR</sequence>
<gene>
    <name evidence="1" type="primary">SGF11</name>
    <name type="ordered locus">KLLA0D11682g</name>
</gene>
<evidence type="ECO:0000255" key="1">
    <source>
        <dbReference type="HAMAP-Rule" id="MF_03047"/>
    </source>
</evidence>
<reference key="1">
    <citation type="journal article" date="2004" name="Nature">
        <title>Genome evolution in yeasts.</title>
        <authorList>
            <person name="Dujon B."/>
            <person name="Sherman D."/>
            <person name="Fischer G."/>
            <person name="Durrens P."/>
            <person name="Casaregola S."/>
            <person name="Lafontaine I."/>
            <person name="de Montigny J."/>
            <person name="Marck C."/>
            <person name="Neuveglise C."/>
            <person name="Talla E."/>
            <person name="Goffard N."/>
            <person name="Frangeul L."/>
            <person name="Aigle M."/>
            <person name="Anthouard V."/>
            <person name="Babour A."/>
            <person name="Barbe V."/>
            <person name="Barnay S."/>
            <person name="Blanchin S."/>
            <person name="Beckerich J.-M."/>
            <person name="Beyne E."/>
            <person name="Bleykasten C."/>
            <person name="Boisrame A."/>
            <person name="Boyer J."/>
            <person name="Cattolico L."/>
            <person name="Confanioleri F."/>
            <person name="de Daruvar A."/>
            <person name="Despons L."/>
            <person name="Fabre E."/>
            <person name="Fairhead C."/>
            <person name="Ferry-Dumazet H."/>
            <person name="Groppi A."/>
            <person name="Hantraye F."/>
            <person name="Hennequin C."/>
            <person name="Jauniaux N."/>
            <person name="Joyet P."/>
            <person name="Kachouri R."/>
            <person name="Kerrest A."/>
            <person name="Koszul R."/>
            <person name="Lemaire M."/>
            <person name="Lesur I."/>
            <person name="Ma L."/>
            <person name="Muller H."/>
            <person name="Nicaud J.-M."/>
            <person name="Nikolski M."/>
            <person name="Oztas S."/>
            <person name="Ozier-Kalogeropoulos O."/>
            <person name="Pellenz S."/>
            <person name="Potier S."/>
            <person name="Richard G.-F."/>
            <person name="Straub M.-L."/>
            <person name="Suleau A."/>
            <person name="Swennen D."/>
            <person name="Tekaia F."/>
            <person name="Wesolowski-Louvel M."/>
            <person name="Westhof E."/>
            <person name="Wirth B."/>
            <person name="Zeniou-Meyer M."/>
            <person name="Zivanovic Y."/>
            <person name="Bolotin-Fukuhara M."/>
            <person name="Thierry A."/>
            <person name="Bouchier C."/>
            <person name="Caudron B."/>
            <person name="Scarpelli C."/>
            <person name="Gaillardin C."/>
            <person name="Weissenbach J."/>
            <person name="Wincker P."/>
            <person name="Souciet J.-L."/>
        </authorList>
    </citation>
    <scope>NUCLEOTIDE SEQUENCE [LARGE SCALE GENOMIC DNA]</scope>
    <source>
        <strain>ATCC 8585 / CBS 2359 / DSM 70799 / NBRC 1267 / NRRL Y-1140 / WM37</strain>
    </source>
</reference>
<organism>
    <name type="scientific">Kluyveromyces lactis (strain ATCC 8585 / CBS 2359 / DSM 70799 / NBRC 1267 / NRRL Y-1140 / WM37)</name>
    <name type="common">Yeast</name>
    <name type="synonym">Candida sphaerica</name>
    <dbReference type="NCBI Taxonomy" id="284590"/>
    <lineage>
        <taxon>Eukaryota</taxon>
        <taxon>Fungi</taxon>
        <taxon>Dikarya</taxon>
        <taxon>Ascomycota</taxon>
        <taxon>Saccharomycotina</taxon>
        <taxon>Saccharomycetes</taxon>
        <taxon>Saccharomycetales</taxon>
        <taxon>Saccharomycetaceae</taxon>
        <taxon>Kluyveromyces</taxon>
    </lineage>
</organism>